<reference key="1">
    <citation type="journal article" date="2000" name="DNA Seq.">
        <title>Structure of the urease operon of Corynebacterium glutamicum.</title>
        <authorList>
            <person name="Puskas L.G."/>
            <person name="Inui M."/>
            <person name="Yukawa H."/>
        </authorList>
    </citation>
    <scope>NUCLEOTIDE SEQUENCE [GENOMIC DNA]</scope>
    <scope>INDUCTION</scope>
    <source>
        <strain>ATCC 13869 / DSMZ 1412 / NCIMB 9567</strain>
    </source>
</reference>
<reference key="2">
    <citation type="journal article" date="2000" name="FEMS Microbiol. Lett.">
        <title>Urease of Corynebacterium glutamicum: organization of corresponding genes and investigation of activity.</title>
        <authorList>
            <person name="Nolden L."/>
            <person name="Beckers G."/>
            <person name="Moeckel B."/>
            <person name="Pfefferle W."/>
            <person name="Nampoothiri K.M."/>
            <person name="Kraemer R."/>
            <person name="Burkovski A."/>
        </authorList>
    </citation>
    <scope>NUCLEOTIDE SEQUENCE [GENOMIC DNA]</scope>
    <scope>OPERON STRUCTURE</scope>
    <source>
        <strain>ATCC 13032 / DSM 20300 / JCM 1318 / BCRC 11384 / CCUG 27702 / LMG 3730 / NBRC 12168 / NCIMB 10025 / NRRL B-2784 / 534</strain>
    </source>
</reference>
<reference key="3">
    <citation type="journal article" date="2003" name="Appl. Microbiol. Biotechnol.">
        <title>The Corynebacterium glutamicum genome: features and impacts on biotechnological processes.</title>
        <authorList>
            <person name="Ikeda M."/>
            <person name="Nakagawa S."/>
        </authorList>
    </citation>
    <scope>NUCLEOTIDE SEQUENCE [LARGE SCALE GENOMIC DNA]</scope>
    <source>
        <strain>ATCC 13032 / DSM 20300 / JCM 1318 / BCRC 11384 / CCUG 27702 / LMG 3730 / NBRC 12168 / NCIMB 10025 / NRRL B-2784 / 534</strain>
    </source>
</reference>
<reference key="4">
    <citation type="journal article" date="2003" name="J. Biotechnol.">
        <title>The complete Corynebacterium glutamicum ATCC 13032 genome sequence and its impact on the production of L-aspartate-derived amino acids and vitamins.</title>
        <authorList>
            <person name="Kalinowski J."/>
            <person name="Bathe B."/>
            <person name="Bartels D."/>
            <person name="Bischoff N."/>
            <person name="Bott M."/>
            <person name="Burkovski A."/>
            <person name="Dusch N."/>
            <person name="Eggeling L."/>
            <person name="Eikmanns B.J."/>
            <person name="Gaigalat L."/>
            <person name="Goesmann A."/>
            <person name="Hartmann M."/>
            <person name="Huthmacher K."/>
            <person name="Kraemer R."/>
            <person name="Linke B."/>
            <person name="McHardy A.C."/>
            <person name="Meyer F."/>
            <person name="Moeckel B."/>
            <person name="Pfefferle W."/>
            <person name="Puehler A."/>
            <person name="Rey D.A."/>
            <person name="Rueckert C."/>
            <person name="Rupp O."/>
            <person name="Sahm H."/>
            <person name="Wendisch V.F."/>
            <person name="Wiegraebe I."/>
            <person name="Tauch A."/>
        </authorList>
    </citation>
    <scope>NUCLEOTIDE SEQUENCE [LARGE SCALE GENOMIC DNA]</scope>
    <source>
        <strain>ATCC 13032 / DSM 20300 / JCM 1318 / BCRC 11384 / CCUG 27702 / LMG 3730 / NBRC 12168 / NCIMB 10025 / NRRL B-2784 / 534</strain>
    </source>
</reference>
<reference key="5">
    <citation type="journal article" date="2004" name="J. Bacteriol.">
        <title>Molecular identification of the urea uptake system and transcriptional analysis of urea transporter- and urease-encoding genes in Corynebacterium glutamicum.</title>
        <authorList>
            <person name="Beckers G."/>
            <person name="Bendt A.K."/>
            <person name="Kraemer R."/>
            <person name="Burkovski A."/>
        </authorList>
    </citation>
    <scope>INDUCTION</scope>
    <scope>IDENTIFICATION BY MASS SPECTROMETRY</scope>
</reference>
<sequence>MIPGEYILSSESLTGNVGREAKTIEIINTGDRPVQIGSHFHFAEVNPSISFDRSEGYGFRLDIPSGTAVRLEPGDARTVNLVAIGGDRIVAGFRDLVDGPLEDLKVNVWEGREDGWRRSSAAGDAPQELPQVEAAERGRKLDDATDVDTNVGTEEGFEEGRN</sequence>
<accession>Q79VJ4</accession>
<accession>Q9L421</accession>
<accession>Q9RHM5</accession>
<dbReference type="EC" id="3.5.1.5" evidence="1"/>
<dbReference type="EMBL" id="AB029154">
    <property type="protein sequence ID" value="BAA88553.1"/>
    <property type="molecule type" value="Genomic_DNA"/>
</dbReference>
<dbReference type="EMBL" id="AJ251883">
    <property type="protein sequence ID" value="CAB81936.1"/>
    <property type="molecule type" value="Genomic_DNA"/>
</dbReference>
<dbReference type="EMBL" id="BA000036">
    <property type="protein sequence ID" value="BAB97478.1"/>
    <property type="molecule type" value="Genomic_DNA"/>
</dbReference>
<dbReference type="EMBL" id="BX927148">
    <property type="protein sequence ID" value="CAF18653.1"/>
    <property type="molecule type" value="Genomic_DNA"/>
</dbReference>
<dbReference type="RefSeq" id="NP_599337.1">
    <property type="nucleotide sequence ID" value="NC_003450.3"/>
</dbReference>
<dbReference type="RefSeq" id="WP_011013377.1">
    <property type="nucleotide sequence ID" value="NC_006958.1"/>
</dbReference>
<dbReference type="SMR" id="Q79VJ4"/>
<dbReference type="STRING" id="196627.cg0114"/>
<dbReference type="KEGG" id="cgb:cg0114"/>
<dbReference type="KEGG" id="cgl:Cgl0085"/>
<dbReference type="PATRIC" id="fig|196627.13.peg.86"/>
<dbReference type="eggNOG" id="COG0832">
    <property type="taxonomic scope" value="Bacteria"/>
</dbReference>
<dbReference type="HOGENOM" id="CLU_129707_1_0_11"/>
<dbReference type="OrthoDB" id="9797217at2"/>
<dbReference type="BioCyc" id="CORYNE:G18NG-9634-MONOMER"/>
<dbReference type="UniPathway" id="UPA00258">
    <property type="reaction ID" value="UER00370"/>
</dbReference>
<dbReference type="Proteomes" id="UP000000582">
    <property type="component" value="Chromosome"/>
</dbReference>
<dbReference type="Proteomes" id="UP000001009">
    <property type="component" value="Chromosome"/>
</dbReference>
<dbReference type="GO" id="GO:0035550">
    <property type="term" value="C:urease complex"/>
    <property type="evidence" value="ECO:0007669"/>
    <property type="project" value="InterPro"/>
</dbReference>
<dbReference type="GO" id="GO:0009039">
    <property type="term" value="F:urease activity"/>
    <property type="evidence" value="ECO:0007669"/>
    <property type="project" value="UniProtKB-UniRule"/>
</dbReference>
<dbReference type="GO" id="GO:0043419">
    <property type="term" value="P:urea catabolic process"/>
    <property type="evidence" value="ECO:0007669"/>
    <property type="project" value="UniProtKB-UniRule"/>
</dbReference>
<dbReference type="CDD" id="cd00407">
    <property type="entry name" value="Urease_beta"/>
    <property type="match status" value="1"/>
</dbReference>
<dbReference type="Gene3D" id="2.10.150.10">
    <property type="entry name" value="Urease, beta subunit"/>
    <property type="match status" value="1"/>
</dbReference>
<dbReference type="HAMAP" id="MF_01954">
    <property type="entry name" value="Urease_beta"/>
    <property type="match status" value="1"/>
</dbReference>
<dbReference type="InterPro" id="IPR002019">
    <property type="entry name" value="Urease_beta-like"/>
</dbReference>
<dbReference type="InterPro" id="IPR036461">
    <property type="entry name" value="Urease_betasu_sf"/>
</dbReference>
<dbReference type="InterPro" id="IPR050069">
    <property type="entry name" value="Urease_subunit"/>
</dbReference>
<dbReference type="NCBIfam" id="NF009682">
    <property type="entry name" value="PRK13203.1"/>
    <property type="match status" value="1"/>
</dbReference>
<dbReference type="NCBIfam" id="TIGR00192">
    <property type="entry name" value="urease_beta"/>
    <property type="match status" value="1"/>
</dbReference>
<dbReference type="PANTHER" id="PTHR33569">
    <property type="entry name" value="UREASE"/>
    <property type="match status" value="1"/>
</dbReference>
<dbReference type="PANTHER" id="PTHR33569:SF1">
    <property type="entry name" value="UREASE"/>
    <property type="match status" value="1"/>
</dbReference>
<dbReference type="Pfam" id="PF00699">
    <property type="entry name" value="Urease_beta"/>
    <property type="match status" value="1"/>
</dbReference>
<dbReference type="SUPFAM" id="SSF51278">
    <property type="entry name" value="Urease, beta-subunit"/>
    <property type="match status" value="1"/>
</dbReference>
<evidence type="ECO:0000255" key="1">
    <source>
        <dbReference type="HAMAP-Rule" id="MF_01954"/>
    </source>
</evidence>
<evidence type="ECO:0000256" key="2">
    <source>
        <dbReference type="SAM" id="MobiDB-lite"/>
    </source>
</evidence>
<evidence type="ECO:0000269" key="3">
    <source>
    </source>
</evidence>
<evidence type="ECO:0000269" key="4">
    <source>
    </source>
</evidence>
<evidence type="ECO:0000305" key="5"/>
<feature type="chain" id="PRO_0000234246" description="Urease subunit beta">
    <location>
        <begin position="1"/>
        <end position="162"/>
    </location>
</feature>
<feature type="region of interest" description="Disordered" evidence="2">
    <location>
        <begin position="116"/>
        <end position="162"/>
    </location>
</feature>
<feature type="compositionally biased region" description="Basic and acidic residues" evidence="2">
    <location>
        <begin position="134"/>
        <end position="143"/>
    </location>
</feature>
<feature type="sequence conflict" description="In Ref. 1; BAA88553." evidence="5" ref="1">
    <original>DLK</original>
    <variation>TQ</variation>
    <location>
        <begin position="103"/>
        <end position="105"/>
    </location>
</feature>
<feature type="sequence conflict" description="In Ref. 1; BAA88553." evidence="5" ref="1">
    <original>EGREDGWRRSSAAGDAPQELPQ</original>
    <variation>RTEDDGVVLSCCDVHKIAT</variation>
    <location>
        <begin position="110"/>
        <end position="131"/>
    </location>
</feature>
<feature type="sequence conflict" description="In Ref. 1; BAA88553." evidence="5" ref="1">
    <original>G</original>
    <variation>A</variation>
    <location>
        <position position="138"/>
    </location>
</feature>
<feature type="sequence conflict" description="In Ref. 1; BAA88553." evidence="5" ref="1">
    <original>VD</original>
    <variation>AN</variation>
    <location>
        <begin position="147"/>
        <end position="148"/>
    </location>
</feature>
<feature type="sequence conflict" description="In Ref. 1; BAA88553." evidence="5" ref="1">
    <location>
        <begin position="157"/>
        <end position="160"/>
    </location>
</feature>
<gene>
    <name evidence="1" type="primary">ureB</name>
    <name type="ordered locus">Cgl0085</name>
    <name type="ordered locus">cg0114</name>
</gene>
<proteinExistence type="evidence at protein level"/>
<organism>
    <name type="scientific">Corynebacterium glutamicum (strain ATCC 13032 / DSM 20300 / JCM 1318 / BCRC 11384 / CCUG 27702 / LMG 3730 / NBRC 12168 / NCIMB 10025 / NRRL B-2784 / 534)</name>
    <dbReference type="NCBI Taxonomy" id="196627"/>
    <lineage>
        <taxon>Bacteria</taxon>
        <taxon>Bacillati</taxon>
        <taxon>Actinomycetota</taxon>
        <taxon>Actinomycetes</taxon>
        <taxon>Mycobacteriales</taxon>
        <taxon>Corynebacteriaceae</taxon>
        <taxon>Corynebacterium</taxon>
    </lineage>
</organism>
<keyword id="KW-0963">Cytoplasm</keyword>
<keyword id="KW-0378">Hydrolase</keyword>
<keyword id="KW-1185">Reference proteome</keyword>
<name>URE2_CORGL</name>
<comment type="catalytic activity">
    <reaction evidence="1">
        <text>urea + 2 H2O + H(+) = hydrogencarbonate + 2 NH4(+)</text>
        <dbReference type="Rhea" id="RHEA:20557"/>
        <dbReference type="ChEBI" id="CHEBI:15377"/>
        <dbReference type="ChEBI" id="CHEBI:15378"/>
        <dbReference type="ChEBI" id="CHEBI:16199"/>
        <dbReference type="ChEBI" id="CHEBI:17544"/>
        <dbReference type="ChEBI" id="CHEBI:28938"/>
        <dbReference type="EC" id="3.5.1.5"/>
    </reaction>
</comment>
<comment type="pathway">
    <text evidence="1">Nitrogen metabolism; urea degradation; CO(2) and NH(3) from urea (urease route): step 1/1.</text>
</comment>
<comment type="subunit">
    <text evidence="1">Heterotrimer of UreA (gamma), UreB (beta) and UreC (alpha) subunits. Three heterotrimers associate to form the active enzyme.</text>
</comment>
<comment type="subcellular location">
    <subcellularLocation>
        <location evidence="1">Cytoplasm</location>
    </subcellularLocation>
</comment>
<comment type="induction">
    <text evidence="3 4">By urea and nitrogen starvation.</text>
</comment>
<comment type="similarity">
    <text evidence="1">Belongs to the urease beta subunit family.</text>
</comment>
<protein>
    <recommendedName>
        <fullName evidence="1">Urease subunit beta</fullName>
        <ecNumber evidence="1">3.5.1.5</ecNumber>
    </recommendedName>
    <alternativeName>
        <fullName evidence="1">Urea amidohydrolase subunit beta</fullName>
    </alternativeName>
</protein>